<evidence type="ECO:0000255" key="1">
    <source>
        <dbReference type="HAMAP-Rule" id="MF_00444"/>
    </source>
</evidence>
<accession>Q30NX1</accession>
<keyword id="KW-0963">Cytoplasm</keyword>
<keyword id="KW-0378">Hydrolase</keyword>
<keyword id="KW-0645">Protease</keyword>
<keyword id="KW-1185">Reference proteome</keyword>
<keyword id="KW-0720">Serine protease</keyword>
<sequence length="196" mass="21700">MSYIPYVVEKTARGERSYDIYSRLLKDRIIMLSGEVNDAVASSIVAQMLFLEAEDPEKDIYFYINSPGGVVTAGMAIYDTMNYIRPDVATICVGQAASMGAFLLSSGAKGKRYALPHARIMIHQPLGGAQGQATDIAIQAKEILRMKEELNAILAKNCSQSIKKVEKDTDRDNFMSAEESKEYGMIDEVLLKKSKE</sequence>
<protein>
    <recommendedName>
        <fullName evidence="1">ATP-dependent Clp protease proteolytic subunit</fullName>
        <ecNumber evidence="1">3.4.21.92</ecNumber>
    </recommendedName>
    <alternativeName>
        <fullName evidence="1">Endopeptidase Clp</fullName>
    </alternativeName>
</protein>
<gene>
    <name evidence="1" type="primary">clpP</name>
    <name type="ordered locus">Suden_2036</name>
</gene>
<feature type="chain" id="PRO_0000236418" description="ATP-dependent Clp protease proteolytic subunit">
    <location>
        <begin position="1"/>
        <end position="196"/>
    </location>
</feature>
<feature type="active site" description="Nucleophile" evidence="1">
    <location>
        <position position="98"/>
    </location>
</feature>
<feature type="active site" evidence="1">
    <location>
        <position position="123"/>
    </location>
</feature>
<organism>
    <name type="scientific">Sulfurimonas denitrificans (strain ATCC 33889 / DSM 1251)</name>
    <name type="common">Thiomicrospira denitrificans (strain ATCC 33889 / DSM 1251)</name>
    <dbReference type="NCBI Taxonomy" id="326298"/>
    <lineage>
        <taxon>Bacteria</taxon>
        <taxon>Pseudomonadati</taxon>
        <taxon>Campylobacterota</taxon>
        <taxon>Epsilonproteobacteria</taxon>
        <taxon>Campylobacterales</taxon>
        <taxon>Sulfurimonadaceae</taxon>
        <taxon>Sulfurimonas</taxon>
    </lineage>
</organism>
<reference key="1">
    <citation type="journal article" date="2008" name="Appl. Environ. Microbiol.">
        <title>Genome of the epsilonproteobacterial chemolithoautotroph Sulfurimonas denitrificans.</title>
        <authorList>
            <person name="Sievert S.M."/>
            <person name="Scott K.M."/>
            <person name="Klotz M.G."/>
            <person name="Chain P.S.G."/>
            <person name="Hauser L.J."/>
            <person name="Hemp J."/>
            <person name="Huegler M."/>
            <person name="Land M."/>
            <person name="Lapidus A."/>
            <person name="Larimer F.W."/>
            <person name="Lucas S."/>
            <person name="Malfatti S.A."/>
            <person name="Meyer F."/>
            <person name="Paulsen I.T."/>
            <person name="Ren Q."/>
            <person name="Simon J."/>
            <person name="Bailey K."/>
            <person name="Diaz E."/>
            <person name="Fitzpatrick K.A."/>
            <person name="Glover B."/>
            <person name="Gwatney N."/>
            <person name="Korajkic A."/>
            <person name="Long A."/>
            <person name="Mobberley J.M."/>
            <person name="Pantry S.N."/>
            <person name="Pazder G."/>
            <person name="Peterson S."/>
            <person name="Quintanilla J.D."/>
            <person name="Sprinkle R."/>
            <person name="Stephens J."/>
            <person name="Thomas P."/>
            <person name="Vaughn R."/>
            <person name="Weber M.J."/>
            <person name="Wooten L.L."/>
        </authorList>
    </citation>
    <scope>NUCLEOTIDE SEQUENCE [LARGE SCALE GENOMIC DNA]</scope>
    <source>
        <strain>ATCC 33889 / DSM 1251</strain>
    </source>
</reference>
<proteinExistence type="inferred from homology"/>
<name>CLPP_SULDN</name>
<comment type="function">
    <text evidence="1">Cleaves peptides in various proteins in a process that requires ATP hydrolysis. Has a chymotrypsin-like activity. Plays a major role in the degradation of misfolded proteins.</text>
</comment>
<comment type="catalytic activity">
    <reaction evidence="1">
        <text>Hydrolysis of proteins to small peptides in the presence of ATP and magnesium. alpha-casein is the usual test substrate. In the absence of ATP, only oligopeptides shorter than five residues are hydrolyzed (such as succinyl-Leu-Tyr-|-NHMec, and Leu-Tyr-Leu-|-Tyr-Trp, in which cleavage of the -Tyr-|-Leu- and -Tyr-|-Trp bonds also occurs).</text>
        <dbReference type="EC" id="3.4.21.92"/>
    </reaction>
</comment>
<comment type="subunit">
    <text evidence="1">Fourteen ClpP subunits assemble into 2 heptameric rings which stack back to back to give a disk-like structure with a central cavity, resembling the structure of eukaryotic proteasomes.</text>
</comment>
<comment type="subcellular location">
    <subcellularLocation>
        <location evidence="1">Cytoplasm</location>
    </subcellularLocation>
</comment>
<comment type="similarity">
    <text evidence="1">Belongs to the peptidase S14 family.</text>
</comment>
<dbReference type="EC" id="3.4.21.92" evidence="1"/>
<dbReference type="EMBL" id="CP000153">
    <property type="protein sequence ID" value="ABB45310.1"/>
    <property type="molecule type" value="Genomic_DNA"/>
</dbReference>
<dbReference type="RefSeq" id="WP_011373650.1">
    <property type="nucleotide sequence ID" value="NC_007575.1"/>
</dbReference>
<dbReference type="SMR" id="Q30NX1"/>
<dbReference type="STRING" id="326298.Suden_2036"/>
<dbReference type="MEROPS" id="S14.001"/>
<dbReference type="KEGG" id="tdn:Suden_2036"/>
<dbReference type="eggNOG" id="COG0740">
    <property type="taxonomic scope" value="Bacteria"/>
</dbReference>
<dbReference type="HOGENOM" id="CLU_058707_3_2_7"/>
<dbReference type="OrthoDB" id="9802800at2"/>
<dbReference type="Proteomes" id="UP000002714">
    <property type="component" value="Chromosome"/>
</dbReference>
<dbReference type="GO" id="GO:0005737">
    <property type="term" value="C:cytoplasm"/>
    <property type="evidence" value="ECO:0007669"/>
    <property type="project" value="UniProtKB-SubCell"/>
</dbReference>
<dbReference type="GO" id="GO:0009368">
    <property type="term" value="C:endopeptidase Clp complex"/>
    <property type="evidence" value="ECO:0007669"/>
    <property type="project" value="TreeGrafter"/>
</dbReference>
<dbReference type="GO" id="GO:0004176">
    <property type="term" value="F:ATP-dependent peptidase activity"/>
    <property type="evidence" value="ECO:0007669"/>
    <property type="project" value="InterPro"/>
</dbReference>
<dbReference type="GO" id="GO:0051117">
    <property type="term" value="F:ATPase binding"/>
    <property type="evidence" value="ECO:0007669"/>
    <property type="project" value="TreeGrafter"/>
</dbReference>
<dbReference type="GO" id="GO:0004252">
    <property type="term" value="F:serine-type endopeptidase activity"/>
    <property type="evidence" value="ECO:0007669"/>
    <property type="project" value="UniProtKB-UniRule"/>
</dbReference>
<dbReference type="GO" id="GO:0006515">
    <property type="term" value="P:protein quality control for misfolded or incompletely synthesized proteins"/>
    <property type="evidence" value="ECO:0007669"/>
    <property type="project" value="TreeGrafter"/>
</dbReference>
<dbReference type="CDD" id="cd07017">
    <property type="entry name" value="S14_ClpP_2"/>
    <property type="match status" value="1"/>
</dbReference>
<dbReference type="FunFam" id="3.90.226.10:FF:000001">
    <property type="entry name" value="ATP-dependent Clp protease proteolytic subunit"/>
    <property type="match status" value="1"/>
</dbReference>
<dbReference type="Gene3D" id="3.90.226.10">
    <property type="entry name" value="2-enoyl-CoA Hydratase, Chain A, domain 1"/>
    <property type="match status" value="1"/>
</dbReference>
<dbReference type="HAMAP" id="MF_00444">
    <property type="entry name" value="ClpP"/>
    <property type="match status" value="1"/>
</dbReference>
<dbReference type="InterPro" id="IPR001907">
    <property type="entry name" value="ClpP"/>
</dbReference>
<dbReference type="InterPro" id="IPR029045">
    <property type="entry name" value="ClpP/crotonase-like_dom_sf"/>
</dbReference>
<dbReference type="InterPro" id="IPR023562">
    <property type="entry name" value="ClpP/TepA"/>
</dbReference>
<dbReference type="InterPro" id="IPR033135">
    <property type="entry name" value="ClpP_His_AS"/>
</dbReference>
<dbReference type="InterPro" id="IPR018215">
    <property type="entry name" value="ClpP_Ser_AS"/>
</dbReference>
<dbReference type="NCBIfam" id="TIGR00493">
    <property type="entry name" value="clpP"/>
    <property type="match status" value="1"/>
</dbReference>
<dbReference type="NCBIfam" id="NF001368">
    <property type="entry name" value="PRK00277.1"/>
    <property type="match status" value="1"/>
</dbReference>
<dbReference type="NCBIfam" id="NF009205">
    <property type="entry name" value="PRK12553.1"/>
    <property type="match status" value="1"/>
</dbReference>
<dbReference type="PANTHER" id="PTHR10381">
    <property type="entry name" value="ATP-DEPENDENT CLP PROTEASE PROTEOLYTIC SUBUNIT"/>
    <property type="match status" value="1"/>
</dbReference>
<dbReference type="PANTHER" id="PTHR10381:SF70">
    <property type="entry name" value="ATP-DEPENDENT CLP PROTEASE PROTEOLYTIC SUBUNIT"/>
    <property type="match status" value="1"/>
</dbReference>
<dbReference type="Pfam" id="PF00574">
    <property type="entry name" value="CLP_protease"/>
    <property type="match status" value="1"/>
</dbReference>
<dbReference type="PRINTS" id="PR00127">
    <property type="entry name" value="CLPPROTEASEP"/>
</dbReference>
<dbReference type="SUPFAM" id="SSF52096">
    <property type="entry name" value="ClpP/crotonase"/>
    <property type="match status" value="1"/>
</dbReference>
<dbReference type="PROSITE" id="PS00382">
    <property type="entry name" value="CLP_PROTEASE_HIS"/>
    <property type="match status" value="1"/>
</dbReference>
<dbReference type="PROSITE" id="PS00381">
    <property type="entry name" value="CLP_PROTEASE_SER"/>
    <property type="match status" value="1"/>
</dbReference>